<organism>
    <name type="scientific">Yersinia pseudotuberculosis serotype I (strain IP32953)</name>
    <dbReference type="NCBI Taxonomy" id="273123"/>
    <lineage>
        <taxon>Bacteria</taxon>
        <taxon>Pseudomonadati</taxon>
        <taxon>Pseudomonadota</taxon>
        <taxon>Gammaproteobacteria</taxon>
        <taxon>Enterobacterales</taxon>
        <taxon>Yersiniaceae</taxon>
        <taxon>Yersinia</taxon>
    </lineage>
</organism>
<comment type="function">
    <text evidence="1">Catalyzes the transfer of endogenously produced octanoic acid from octanoyl-acyl-carrier-protein onto the lipoyl domains of lipoate-dependent enzymes. Lipoyl-ACP can also act as a substrate although octanoyl-ACP is likely to be the physiological substrate.</text>
</comment>
<comment type="catalytic activity">
    <reaction evidence="1">
        <text>octanoyl-[ACP] + L-lysyl-[protein] = N(6)-octanoyl-L-lysyl-[protein] + holo-[ACP] + H(+)</text>
        <dbReference type="Rhea" id="RHEA:17665"/>
        <dbReference type="Rhea" id="RHEA-COMP:9636"/>
        <dbReference type="Rhea" id="RHEA-COMP:9685"/>
        <dbReference type="Rhea" id="RHEA-COMP:9752"/>
        <dbReference type="Rhea" id="RHEA-COMP:9928"/>
        <dbReference type="ChEBI" id="CHEBI:15378"/>
        <dbReference type="ChEBI" id="CHEBI:29969"/>
        <dbReference type="ChEBI" id="CHEBI:64479"/>
        <dbReference type="ChEBI" id="CHEBI:78463"/>
        <dbReference type="ChEBI" id="CHEBI:78809"/>
        <dbReference type="EC" id="2.3.1.181"/>
    </reaction>
</comment>
<comment type="pathway">
    <text evidence="1">Protein modification; protein lipoylation via endogenous pathway; protein N(6)-(lipoyl)lysine from octanoyl-[acyl-carrier-protein]: step 1/2.</text>
</comment>
<comment type="subcellular location">
    <subcellularLocation>
        <location evidence="1">Cytoplasm</location>
    </subcellularLocation>
</comment>
<comment type="miscellaneous">
    <text evidence="1">In the reaction, the free carboxyl group of octanoic acid is attached via an amide linkage to the epsilon-amino group of a specific lysine residue of lipoyl domains of lipoate-dependent enzymes.</text>
</comment>
<comment type="similarity">
    <text evidence="1">Belongs to the LipB family.</text>
</comment>
<reference key="1">
    <citation type="journal article" date="2004" name="Proc. Natl. Acad. Sci. U.S.A.">
        <title>Insights into the evolution of Yersinia pestis through whole-genome comparison with Yersinia pseudotuberculosis.</title>
        <authorList>
            <person name="Chain P.S.G."/>
            <person name="Carniel E."/>
            <person name="Larimer F.W."/>
            <person name="Lamerdin J."/>
            <person name="Stoutland P.O."/>
            <person name="Regala W.M."/>
            <person name="Georgescu A.M."/>
            <person name="Vergez L.M."/>
            <person name="Land M.L."/>
            <person name="Motin V.L."/>
            <person name="Brubaker R.R."/>
            <person name="Fowler J."/>
            <person name="Hinnebusch J."/>
            <person name="Marceau M."/>
            <person name="Medigue C."/>
            <person name="Simonet M."/>
            <person name="Chenal-Francisque V."/>
            <person name="Souza B."/>
            <person name="Dacheux D."/>
            <person name="Elliott J.M."/>
            <person name="Derbise A."/>
            <person name="Hauser L.J."/>
            <person name="Garcia E."/>
        </authorList>
    </citation>
    <scope>NUCLEOTIDE SEQUENCE [LARGE SCALE GENOMIC DNA]</scope>
    <source>
        <strain>IP32953</strain>
    </source>
</reference>
<sequence>MMPRLQQHKIILRQLGLQPYAPVSQAMHNFTEFRTDTTPDEIWLVEHQHVFTQGQAGKAEHVLMPGDIPVIQSDRGGQVTYHGPGQQVMYVMVDLKRAKIGVRQLVTAIENTVIETLAHFNIDSHARPDAPGVYVEQQKICSLGLRIRRGCSFHGLALNIAMDLEPFQRINPCGYAGMQMTQVSALQPGVTVADVQPVLVREFTRQLGYPTAKLQPWSLSDYLLSSHSSSSVL</sequence>
<name>LIPB_YERPS</name>
<protein>
    <recommendedName>
        <fullName evidence="1">Octanoyltransferase</fullName>
        <ecNumber evidence="1">2.3.1.181</ecNumber>
    </recommendedName>
    <alternativeName>
        <fullName evidence="1">Lipoate-protein ligase B</fullName>
    </alternativeName>
    <alternativeName>
        <fullName evidence="1">Lipoyl/octanoyl transferase</fullName>
    </alternativeName>
    <alternativeName>
        <fullName evidence="1">Octanoyl-[acyl-carrier-protein]-protein N-octanoyltransferase</fullName>
    </alternativeName>
</protein>
<feature type="chain" id="PRO_0000062901" description="Octanoyltransferase">
    <location>
        <begin position="1"/>
        <end position="233"/>
    </location>
</feature>
<feature type="domain" description="BPL/LPL catalytic" evidence="2">
    <location>
        <begin position="36"/>
        <end position="211"/>
    </location>
</feature>
<feature type="active site" description="Acyl-thioester intermediate" evidence="1">
    <location>
        <position position="173"/>
    </location>
</feature>
<feature type="binding site" evidence="1">
    <location>
        <begin position="75"/>
        <end position="82"/>
    </location>
    <ligand>
        <name>substrate</name>
    </ligand>
</feature>
<feature type="binding site" evidence="1">
    <location>
        <begin position="142"/>
        <end position="144"/>
    </location>
    <ligand>
        <name>substrate</name>
    </ligand>
</feature>
<feature type="binding site" evidence="1">
    <location>
        <begin position="155"/>
        <end position="157"/>
    </location>
    <ligand>
        <name>substrate</name>
    </ligand>
</feature>
<feature type="site" description="Lowers pKa of active site Cys" evidence="1">
    <location>
        <position position="139"/>
    </location>
</feature>
<gene>
    <name evidence="1" type="primary">lipB</name>
    <name type="ordered locus">YPTB1092</name>
</gene>
<dbReference type="EC" id="2.3.1.181" evidence="1"/>
<dbReference type="EMBL" id="BX936398">
    <property type="protein sequence ID" value="CAH20332.1"/>
    <property type="molecule type" value="Genomic_DNA"/>
</dbReference>
<dbReference type="RefSeq" id="WP_002218201.1">
    <property type="nucleotide sequence ID" value="NZ_CP009712.1"/>
</dbReference>
<dbReference type="SMR" id="Q66DF4"/>
<dbReference type="GeneID" id="57976096"/>
<dbReference type="KEGG" id="yps:YPTB1092"/>
<dbReference type="UniPathway" id="UPA00538">
    <property type="reaction ID" value="UER00592"/>
</dbReference>
<dbReference type="Proteomes" id="UP000001011">
    <property type="component" value="Chromosome"/>
</dbReference>
<dbReference type="GO" id="GO:0005737">
    <property type="term" value="C:cytoplasm"/>
    <property type="evidence" value="ECO:0007669"/>
    <property type="project" value="UniProtKB-SubCell"/>
</dbReference>
<dbReference type="GO" id="GO:0033819">
    <property type="term" value="F:lipoyl(octanoyl) transferase activity"/>
    <property type="evidence" value="ECO:0007669"/>
    <property type="project" value="UniProtKB-EC"/>
</dbReference>
<dbReference type="GO" id="GO:0036211">
    <property type="term" value="P:protein modification process"/>
    <property type="evidence" value="ECO:0007669"/>
    <property type="project" value="InterPro"/>
</dbReference>
<dbReference type="CDD" id="cd16444">
    <property type="entry name" value="LipB"/>
    <property type="match status" value="1"/>
</dbReference>
<dbReference type="FunFam" id="3.30.930.10:FF:000020">
    <property type="entry name" value="Octanoyltransferase"/>
    <property type="match status" value="1"/>
</dbReference>
<dbReference type="Gene3D" id="3.30.930.10">
    <property type="entry name" value="Bira Bifunctional Protein, Domain 2"/>
    <property type="match status" value="1"/>
</dbReference>
<dbReference type="HAMAP" id="MF_00013">
    <property type="entry name" value="LipB"/>
    <property type="match status" value="1"/>
</dbReference>
<dbReference type="InterPro" id="IPR045864">
    <property type="entry name" value="aa-tRNA-synth_II/BPL/LPL"/>
</dbReference>
<dbReference type="InterPro" id="IPR004143">
    <property type="entry name" value="BPL_LPL_catalytic"/>
</dbReference>
<dbReference type="InterPro" id="IPR000544">
    <property type="entry name" value="Octanoyltransferase"/>
</dbReference>
<dbReference type="InterPro" id="IPR020605">
    <property type="entry name" value="Octanoyltransferase_CS"/>
</dbReference>
<dbReference type="NCBIfam" id="TIGR00214">
    <property type="entry name" value="lipB"/>
    <property type="match status" value="1"/>
</dbReference>
<dbReference type="NCBIfam" id="NF010922">
    <property type="entry name" value="PRK14342.1"/>
    <property type="match status" value="1"/>
</dbReference>
<dbReference type="PANTHER" id="PTHR10993:SF7">
    <property type="entry name" value="LIPOYLTRANSFERASE 2, MITOCHONDRIAL-RELATED"/>
    <property type="match status" value="1"/>
</dbReference>
<dbReference type="PANTHER" id="PTHR10993">
    <property type="entry name" value="OCTANOYLTRANSFERASE"/>
    <property type="match status" value="1"/>
</dbReference>
<dbReference type="Pfam" id="PF21948">
    <property type="entry name" value="LplA-B_cat"/>
    <property type="match status" value="1"/>
</dbReference>
<dbReference type="PIRSF" id="PIRSF016262">
    <property type="entry name" value="LPLase"/>
    <property type="match status" value="1"/>
</dbReference>
<dbReference type="SUPFAM" id="SSF55681">
    <property type="entry name" value="Class II aaRS and biotin synthetases"/>
    <property type="match status" value="1"/>
</dbReference>
<dbReference type="PROSITE" id="PS51733">
    <property type="entry name" value="BPL_LPL_CATALYTIC"/>
    <property type="match status" value="1"/>
</dbReference>
<dbReference type="PROSITE" id="PS01313">
    <property type="entry name" value="LIPB"/>
    <property type="match status" value="1"/>
</dbReference>
<evidence type="ECO:0000255" key="1">
    <source>
        <dbReference type="HAMAP-Rule" id="MF_00013"/>
    </source>
</evidence>
<evidence type="ECO:0000255" key="2">
    <source>
        <dbReference type="PROSITE-ProRule" id="PRU01067"/>
    </source>
</evidence>
<proteinExistence type="inferred from homology"/>
<keyword id="KW-0012">Acyltransferase</keyword>
<keyword id="KW-0963">Cytoplasm</keyword>
<keyword id="KW-0808">Transferase</keyword>
<accession>Q66DF4</accession>